<name>SYR_HISS2</name>
<comment type="catalytic activity">
    <reaction evidence="1">
        <text>tRNA(Arg) + L-arginine + ATP = L-arginyl-tRNA(Arg) + AMP + diphosphate</text>
        <dbReference type="Rhea" id="RHEA:20301"/>
        <dbReference type="Rhea" id="RHEA-COMP:9658"/>
        <dbReference type="Rhea" id="RHEA-COMP:9673"/>
        <dbReference type="ChEBI" id="CHEBI:30616"/>
        <dbReference type="ChEBI" id="CHEBI:32682"/>
        <dbReference type="ChEBI" id="CHEBI:33019"/>
        <dbReference type="ChEBI" id="CHEBI:78442"/>
        <dbReference type="ChEBI" id="CHEBI:78513"/>
        <dbReference type="ChEBI" id="CHEBI:456215"/>
        <dbReference type="EC" id="6.1.1.19"/>
    </reaction>
</comment>
<comment type="subunit">
    <text evidence="1">Monomer.</text>
</comment>
<comment type="subcellular location">
    <subcellularLocation>
        <location evidence="1">Cytoplasm</location>
    </subcellularLocation>
</comment>
<comment type="similarity">
    <text evidence="1">Belongs to the class-I aminoacyl-tRNA synthetase family.</text>
</comment>
<reference key="1">
    <citation type="submission" date="2008-02" db="EMBL/GenBank/DDBJ databases">
        <title>Complete sequence of Haemophilus somnus 2336.</title>
        <authorList>
            <consortium name="US DOE Joint Genome Institute"/>
            <person name="Siddaramappa S."/>
            <person name="Duncan A.J."/>
            <person name="Challacombe J.F."/>
            <person name="Rainey D."/>
            <person name="Gillaspy A.F."/>
            <person name="Carson M."/>
            <person name="Gipson J."/>
            <person name="Gipson M."/>
            <person name="Bruce D."/>
            <person name="Detter J.C."/>
            <person name="Han C.S."/>
            <person name="Land M."/>
            <person name="Tapia R."/>
            <person name="Thompson L.S."/>
            <person name="Orvis J."/>
            <person name="Zaitshik J."/>
            <person name="Barnes G."/>
            <person name="Brettin T.S."/>
            <person name="Dyer D.W."/>
            <person name="Inzana T.J."/>
        </authorList>
    </citation>
    <scope>NUCLEOTIDE SEQUENCE [LARGE SCALE GENOMIC DNA]</scope>
    <source>
        <strain>2336</strain>
    </source>
</reference>
<proteinExistence type="inferred from homology"/>
<evidence type="ECO:0000255" key="1">
    <source>
        <dbReference type="HAMAP-Rule" id="MF_00123"/>
    </source>
</evidence>
<sequence length="577" mass="65102">MNIQSILSNKIKQAMRQAGADEQCDALVKPSSKPQFGDYQANGIMATAKKLGLNPRDFAQKVLDLIDLKNIAEKMEIAGPGFINIFLDKNWLAENIQVTLQDKKLGVTVEEIQTIVVDYSSPNVAKEMHVGHLRSTIIGDAVVRTLEFLGHNVIRANHVGDWGTQFGMLIAYLEKMENEHASAMELADLEAFYRAAKEHYDNDETFAEKARNYVVKLQNGDAYCRTMWKKLVDITMQQNQRNYDRLNVTLTQNDVMGESLYNPMLPEIVADLKAQGLAVEDEGAQVVYLEEFKNKDGDPMGVIVQKKDGGFLYTTTDIAAAKYRYHTLKADRALVFSDTRQSQHMQQAWLITRKAGYVPDSFQLEHKNFGMMLGKDGKPFKTRSGGTVKLTDLLDEAIERADKLISEKSTALSSKEKAAVIEAVGIGSVKYADLSKNRTTDYVFDWDIMLSFEGNTAPYMQYAYTRIRSIFNKTDISEEQLHPAKIQLTDEKERLLAIKLLQFEETVQIVGKEGTPHILCAYLYELAGLFSSFYEHCPILNNDNENVKLSRLKLALLTEKTLKQGLDLLGIKTVEKM</sequence>
<organism>
    <name type="scientific">Histophilus somni (strain 2336)</name>
    <name type="common">Haemophilus somnus</name>
    <dbReference type="NCBI Taxonomy" id="228400"/>
    <lineage>
        <taxon>Bacteria</taxon>
        <taxon>Pseudomonadati</taxon>
        <taxon>Pseudomonadota</taxon>
        <taxon>Gammaproteobacteria</taxon>
        <taxon>Pasteurellales</taxon>
        <taxon>Pasteurellaceae</taxon>
        <taxon>Histophilus</taxon>
    </lineage>
</organism>
<gene>
    <name evidence="1" type="primary">argS</name>
    <name type="ordered locus">HSM_1430</name>
</gene>
<dbReference type="EC" id="6.1.1.19" evidence="1"/>
<dbReference type="EMBL" id="CP000947">
    <property type="protein sequence ID" value="ACA31175.1"/>
    <property type="molecule type" value="Genomic_DNA"/>
</dbReference>
<dbReference type="RefSeq" id="WP_012340575.1">
    <property type="nucleotide sequence ID" value="NC_010519.1"/>
</dbReference>
<dbReference type="SMR" id="B0UUF1"/>
<dbReference type="STRING" id="228400.HSM_1430"/>
<dbReference type="GeneID" id="31487728"/>
<dbReference type="KEGG" id="hsm:HSM_1430"/>
<dbReference type="HOGENOM" id="CLU_006406_5_1_6"/>
<dbReference type="GO" id="GO:0005737">
    <property type="term" value="C:cytoplasm"/>
    <property type="evidence" value="ECO:0007669"/>
    <property type="project" value="UniProtKB-SubCell"/>
</dbReference>
<dbReference type="GO" id="GO:0004814">
    <property type="term" value="F:arginine-tRNA ligase activity"/>
    <property type="evidence" value="ECO:0007669"/>
    <property type="project" value="UniProtKB-UniRule"/>
</dbReference>
<dbReference type="GO" id="GO:0005524">
    <property type="term" value="F:ATP binding"/>
    <property type="evidence" value="ECO:0007669"/>
    <property type="project" value="UniProtKB-UniRule"/>
</dbReference>
<dbReference type="GO" id="GO:0006420">
    <property type="term" value="P:arginyl-tRNA aminoacylation"/>
    <property type="evidence" value="ECO:0007669"/>
    <property type="project" value="UniProtKB-UniRule"/>
</dbReference>
<dbReference type="CDD" id="cd07956">
    <property type="entry name" value="Anticodon_Ia_Arg"/>
    <property type="match status" value="1"/>
</dbReference>
<dbReference type="CDD" id="cd00671">
    <property type="entry name" value="ArgRS_core"/>
    <property type="match status" value="1"/>
</dbReference>
<dbReference type="FunFam" id="1.10.730.10:FF:000001">
    <property type="entry name" value="Arginine--tRNA ligase"/>
    <property type="match status" value="1"/>
</dbReference>
<dbReference type="FunFam" id="3.40.50.620:FF:000030">
    <property type="entry name" value="Arginine--tRNA ligase"/>
    <property type="match status" value="1"/>
</dbReference>
<dbReference type="Gene3D" id="3.30.1360.70">
    <property type="entry name" value="Arginyl tRNA synthetase N-terminal domain"/>
    <property type="match status" value="1"/>
</dbReference>
<dbReference type="Gene3D" id="3.40.50.620">
    <property type="entry name" value="HUPs"/>
    <property type="match status" value="1"/>
</dbReference>
<dbReference type="Gene3D" id="1.10.730.10">
    <property type="entry name" value="Isoleucyl-tRNA Synthetase, Domain 1"/>
    <property type="match status" value="1"/>
</dbReference>
<dbReference type="HAMAP" id="MF_00123">
    <property type="entry name" value="Arg_tRNA_synth"/>
    <property type="match status" value="1"/>
</dbReference>
<dbReference type="InterPro" id="IPR001412">
    <property type="entry name" value="aa-tRNA-synth_I_CS"/>
</dbReference>
<dbReference type="InterPro" id="IPR001278">
    <property type="entry name" value="Arg-tRNA-ligase"/>
</dbReference>
<dbReference type="InterPro" id="IPR005148">
    <property type="entry name" value="Arg-tRNA-synth_N"/>
</dbReference>
<dbReference type="InterPro" id="IPR036695">
    <property type="entry name" value="Arg-tRNA-synth_N_sf"/>
</dbReference>
<dbReference type="InterPro" id="IPR035684">
    <property type="entry name" value="ArgRS_core"/>
</dbReference>
<dbReference type="InterPro" id="IPR008909">
    <property type="entry name" value="DALR_anticod-bd"/>
</dbReference>
<dbReference type="InterPro" id="IPR014729">
    <property type="entry name" value="Rossmann-like_a/b/a_fold"/>
</dbReference>
<dbReference type="InterPro" id="IPR009080">
    <property type="entry name" value="tRNAsynth_Ia_anticodon-bd"/>
</dbReference>
<dbReference type="NCBIfam" id="TIGR00456">
    <property type="entry name" value="argS"/>
    <property type="match status" value="1"/>
</dbReference>
<dbReference type="PANTHER" id="PTHR11956:SF5">
    <property type="entry name" value="ARGININE--TRNA LIGASE, CYTOPLASMIC"/>
    <property type="match status" value="1"/>
</dbReference>
<dbReference type="PANTHER" id="PTHR11956">
    <property type="entry name" value="ARGINYL-TRNA SYNTHETASE"/>
    <property type="match status" value="1"/>
</dbReference>
<dbReference type="Pfam" id="PF03485">
    <property type="entry name" value="Arg_tRNA_synt_N"/>
    <property type="match status" value="1"/>
</dbReference>
<dbReference type="Pfam" id="PF05746">
    <property type="entry name" value="DALR_1"/>
    <property type="match status" value="1"/>
</dbReference>
<dbReference type="Pfam" id="PF00750">
    <property type="entry name" value="tRNA-synt_1d"/>
    <property type="match status" value="1"/>
</dbReference>
<dbReference type="PRINTS" id="PR01038">
    <property type="entry name" value="TRNASYNTHARG"/>
</dbReference>
<dbReference type="SMART" id="SM01016">
    <property type="entry name" value="Arg_tRNA_synt_N"/>
    <property type="match status" value="1"/>
</dbReference>
<dbReference type="SMART" id="SM00836">
    <property type="entry name" value="DALR_1"/>
    <property type="match status" value="1"/>
</dbReference>
<dbReference type="SUPFAM" id="SSF47323">
    <property type="entry name" value="Anticodon-binding domain of a subclass of class I aminoacyl-tRNA synthetases"/>
    <property type="match status" value="1"/>
</dbReference>
<dbReference type="SUPFAM" id="SSF55190">
    <property type="entry name" value="Arginyl-tRNA synthetase (ArgRS), N-terminal 'additional' domain"/>
    <property type="match status" value="1"/>
</dbReference>
<dbReference type="SUPFAM" id="SSF52374">
    <property type="entry name" value="Nucleotidylyl transferase"/>
    <property type="match status" value="1"/>
</dbReference>
<dbReference type="PROSITE" id="PS00178">
    <property type="entry name" value="AA_TRNA_LIGASE_I"/>
    <property type="match status" value="1"/>
</dbReference>
<keyword id="KW-0030">Aminoacyl-tRNA synthetase</keyword>
<keyword id="KW-0067">ATP-binding</keyword>
<keyword id="KW-0963">Cytoplasm</keyword>
<keyword id="KW-0436">Ligase</keyword>
<keyword id="KW-0547">Nucleotide-binding</keyword>
<keyword id="KW-0648">Protein biosynthesis</keyword>
<protein>
    <recommendedName>
        <fullName evidence="1">Arginine--tRNA ligase</fullName>
        <ecNumber evidence="1">6.1.1.19</ecNumber>
    </recommendedName>
    <alternativeName>
        <fullName evidence="1">Arginyl-tRNA synthetase</fullName>
        <shortName evidence="1">ArgRS</shortName>
    </alternativeName>
</protein>
<feature type="chain" id="PRO_1000076217" description="Arginine--tRNA ligase">
    <location>
        <begin position="1"/>
        <end position="577"/>
    </location>
</feature>
<feature type="short sequence motif" description="'HIGH' region">
    <location>
        <begin position="122"/>
        <end position="132"/>
    </location>
</feature>
<accession>B0UUF1</accession>